<reference key="1">
    <citation type="submission" date="2008-10" db="EMBL/GenBank/DDBJ databases">
        <title>Genome sequence of Bacillus cereus B4264.</title>
        <authorList>
            <person name="Dodson R.J."/>
            <person name="Durkin A.S."/>
            <person name="Rosovitz M.J."/>
            <person name="Rasko D.A."/>
            <person name="Hoffmaster A."/>
            <person name="Ravel J."/>
            <person name="Sutton G."/>
        </authorList>
    </citation>
    <scope>NUCLEOTIDE SEQUENCE [LARGE SCALE GENOMIC DNA]</scope>
    <source>
        <strain>B4264</strain>
    </source>
</reference>
<sequence length="144" mass="16172">MLMPKRVKYRREHRGKMRGRAKGGTEIAFGEFGLQAQAASWITNRQIEAARRAMTRYMKRGGKVWIKIFPSKPYTAKPLEVRMGSGKGAPEGWVAVVKPGKIMFEIAGVSEEVAREALRLAAHKLPVKCKFVKREENGGESNEN</sequence>
<comment type="function">
    <text evidence="1">Binds 23S rRNA and is also seen to make contacts with the A and possibly P site tRNAs.</text>
</comment>
<comment type="subunit">
    <text evidence="1">Part of the 50S ribosomal subunit.</text>
</comment>
<comment type="similarity">
    <text evidence="1">Belongs to the universal ribosomal protein uL16 family.</text>
</comment>
<dbReference type="EMBL" id="CP001176">
    <property type="protein sequence ID" value="ACK60344.1"/>
    <property type="molecule type" value="Genomic_DNA"/>
</dbReference>
<dbReference type="RefSeq" id="WP_000928969.1">
    <property type="nucleotide sequence ID" value="NZ_VEHB01000017.1"/>
</dbReference>
<dbReference type="SMR" id="B7HJ55"/>
<dbReference type="GeneID" id="93010936"/>
<dbReference type="KEGG" id="bcb:BCB4264_A0138"/>
<dbReference type="HOGENOM" id="CLU_078858_2_1_9"/>
<dbReference type="Proteomes" id="UP000007096">
    <property type="component" value="Chromosome"/>
</dbReference>
<dbReference type="GO" id="GO:0022625">
    <property type="term" value="C:cytosolic large ribosomal subunit"/>
    <property type="evidence" value="ECO:0007669"/>
    <property type="project" value="TreeGrafter"/>
</dbReference>
<dbReference type="GO" id="GO:0019843">
    <property type="term" value="F:rRNA binding"/>
    <property type="evidence" value="ECO:0007669"/>
    <property type="project" value="UniProtKB-UniRule"/>
</dbReference>
<dbReference type="GO" id="GO:0003735">
    <property type="term" value="F:structural constituent of ribosome"/>
    <property type="evidence" value="ECO:0007669"/>
    <property type="project" value="InterPro"/>
</dbReference>
<dbReference type="GO" id="GO:0000049">
    <property type="term" value="F:tRNA binding"/>
    <property type="evidence" value="ECO:0007669"/>
    <property type="project" value="UniProtKB-KW"/>
</dbReference>
<dbReference type="GO" id="GO:0006412">
    <property type="term" value="P:translation"/>
    <property type="evidence" value="ECO:0007669"/>
    <property type="project" value="UniProtKB-UniRule"/>
</dbReference>
<dbReference type="CDD" id="cd01433">
    <property type="entry name" value="Ribosomal_L16_L10e"/>
    <property type="match status" value="1"/>
</dbReference>
<dbReference type="FunFam" id="3.90.1170.10:FF:000001">
    <property type="entry name" value="50S ribosomal protein L16"/>
    <property type="match status" value="1"/>
</dbReference>
<dbReference type="Gene3D" id="3.90.1170.10">
    <property type="entry name" value="Ribosomal protein L10e/L16"/>
    <property type="match status" value="1"/>
</dbReference>
<dbReference type="HAMAP" id="MF_01342">
    <property type="entry name" value="Ribosomal_uL16"/>
    <property type="match status" value="1"/>
</dbReference>
<dbReference type="InterPro" id="IPR047873">
    <property type="entry name" value="Ribosomal_uL16"/>
</dbReference>
<dbReference type="InterPro" id="IPR000114">
    <property type="entry name" value="Ribosomal_uL16_bact-type"/>
</dbReference>
<dbReference type="InterPro" id="IPR020798">
    <property type="entry name" value="Ribosomal_uL16_CS"/>
</dbReference>
<dbReference type="InterPro" id="IPR016180">
    <property type="entry name" value="Ribosomal_uL16_dom"/>
</dbReference>
<dbReference type="InterPro" id="IPR036920">
    <property type="entry name" value="Ribosomal_uL16_sf"/>
</dbReference>
<dbReference type="NCBIfam" id="TIGR01164">
    <property type="entry name" value="rplP_bact"/>
    <property type="match status" value="1"/>
</dbReference>
<dbReference type="PANTHER" id="PTHR12220">
    <property type="entry name" value="50S/60S RIBOSOMAL PROTEIN L16"/>
    <property type="match status" value="1"/>
</dbReference>
<dbReference type="PANTHER" id="PTHR12220:SF13">
    <property type="entry name" value="LARGE RIBOSOMAL SUBUNIT PROTEIN UL16M"/>
    <property type="match status" value="1"/>
</dbReference>
<dbReference type="Pfam" id="PF00252">
    <property type="entry name" value="Ribosomal_L16"/>
    <property type="match status" value="1"/>
</dbReference>
<dbReference type="PRINTS" id="PR00060">
    <property type="entry name" value="RIBOSOMALL16"/>
</dbReference>
<dbReference type="SUPFAM" id="SSF54686">
    <property type="entry name" value="Ribosomal protein L16p/L10e"/>
    <property type="match status" value="1"/>
</dbReference>
<dbReference type="PROSITE" id="PS00586">
    <property type="entry name" value="RIBOSOMAL_L16_1"/>
    <property type="match status" value="1"/>
</dbReference>
<dbReference type="PROSITE" id="PS00701">
    <property type="entry name" value="RIBOSOMAL_L16_2"/>
    <property type="match status" value="1"/>
</dbReference>
<keyword id="KW-0687">Ribonucleoprotein</keyword>
<keyword id="KW-0689">Ribosomal protein</keyword>
<keyword id="KW-0694">RNA-binding</keyword>
<keyword id="KW-0699">rRNA-binding</keyword>
<keyword id="KW-0820">tRNA-binding</keyword>
<organism>
    <name type="scientific">Bacillus cereus (strain B4264)</name>
    <dbReference type="NCBI Taxonomy" id="405532"/>
    <lineage>
        <taxon>Bacteria</taxon>
        <taxon>Bacillati</taxon>
        <taxon>Bacillota</taxon>
        <taxon>Bacilli</taxon>
        <taxon>Bacillales</taxon>
        <taxon>Bacillaceae</taxon>
        <taxon>Bacillus</taxon>
        <taxon>Bacillus cereus group</taxon>
    </lineage>
</organism>
<name>RL16_BACC4</name>
<proteinExistence type="inferred from homology"/>
<gene>
    <name evidence="1" type="primary">rplP</name>
    <name type="ordered locus">BCB4264_A0138</name>
</gene>
<evidence type="ECO:0000255" key="1">
    <source>
        <dbReference type="HAMAP-Rule" id="MF_01342"/>
    </source>
</evidence>
<evidence type="ECO:0000305" key="2"/>
<accession>B7HJ55</accession>
<feature type="chain" id="PRO_1000142924" description="Large ribosomal subunit protein uL16">
    <location>
        <begin position="1"/>
        <end position="144"/>
    </location>
</feature>
<protein>
    <recommendedName>
        <fullName evidence="1">Large ribosomal subunit protein uL16</fullName>
    </recommendedName>
    <alternativeName>
        <fullName evidence="2">50S ribosomal protein L16</fullName>
    </alternativeName>
</protein>